<comment type="subcellular location">
    <subcellularLocation>
        <location>Secreted</location>
    </subcellularLocation>
</comment>
<comment type="tissue specificity">
    <text>Expressed by the venom gland.</text>
</comment>
<comment type="allergen">
    <text>Causes an allergic reaction in human.</text>
</comment>
<comment type="similarity">
    <text evidence="3">Belongs to the CRISP family. Venom allergen 5-like subfamily.</text>
</comment>
<name>VA5_POLDO</name>
<dbReference type="EMBL" id="AY685000">
    <property type="protein sequence ID" value="AAT95010.1"/>
    <property type="molecule type" value="mRNA"/>
</dbReference>
<dbReference type="RefSeq" id="NP_001310265.1">
    <property type="nucleotide sequence ID" value="NM_001323336.1"/>
</dbReference>
<dbReference type="SMR" id="P81656"/>
<dbReference type="Allergome" id="3438">
    <property type="allergen name" value="Pol d 5.0101"/>
</dbReference>
<dbReference type="Allergome" id="588">
    <property type="allergen name" value="Pol d 5"/>
</dbReference>
<dbReference type="EnsemblMetazoa" id="XM_015320485.1">
    <property type="protein sequence ID" value="XP_015175971.1"/>
    <property type="gene ID" value="LOC107066143"/>
</dbReference>
<dbReference type="GeneID" id="107066143"/>
<dbReference type="OrthoDB" id="414826at2759"/>
<dbReference type="Proteomes" id="UP000694924">
    <property type="component" value="Unplaced"/>
</dbReference>
<dbReference type="GO" id="GO:0005576">
    <property type="term" value="C:extracellular region"/>
    <property type="evidence" value="ECO:0007669"/>
    <property type="project" value="UniProtKB-SubCell"/>
</dbReference>
<dbReference type="CDD" id="cd05380">
    <property type="entry name" value="CAP_euk"/>
    <property type="match status" value="1"/>
</dbReference>
<dbReference type="Gene3D" id="3.40.33.10">
    <property type="entry name" value="CAP"/>
    <property type="match status" value="1"/>
</dbReference>
<dbReference type="InterPro" id="IPR018244">
    <property type="entry name" value="Allrgn_V5/Tpx1_CS"/>
</dbReference>
<dbReference type="InterPro" id="IPR014044">
    <property type="entry name" value="CAP_dom"/>
</dbReference>
<dbReference type="InterPro" id="IPR035940">
    <property type="entry name" value="CAP_sf"/>
</dbReference>
<dbReference type="InterPro" id="IPR001283">
    <property type="entry name" value="CRISP-related"/>
</dbReference>
<dbReference type="InterPro" id="IPR002413">
    <property type="entry name" value="V5_allergen-like"/>
</dbReference>
<dbReference type="PANTHER" id="PTHR10334">
    <property type="entry name" value="CYSTEINE-RICH SECRETORY PROTEIN-RELATED"/>
    <property type="match status" value="1"/>
</dbReference>
<dbReference type="Pfam" id="PF00188">
    <property type="entry name" value="CAP"/>
    <property type="match status" value="1"/>
</dbReference>
<dbReference type="PRINTS" id="PR00838">
    <property type="entry name" value="V5ALLERGEN"/>
</dbReference>
<dbReference type="PRINTS" id="PR00837">
    <property type="entry name" value="V5TPXLIKE"/>
</dbReference>
<dbReference type="SMART" id="SM00198">
    <property type="entry name" value="SCP"/>
    <property type="match status" value="1"/>
</dbReference>
<dbReference type="SUPFAM" id="SSF55797">
    <property type="entry name" value="PR-1-like"/>
    <property type="match status" value="1"/>
</dbReference>
<dbReference type="PROSITE" id="PS01009">
    <property type="entry name" value="CRISP_1"/>
    <property type="match status" value="1"/>
</dbReference>
<dbReference type="PROSITE" id="PS01010">
    <property type="entry name" value="CRISP_2"/>
    <property type="match status" value="1"/>
</dbReference>
<evidence type="ECO:0000250" key="1"/>
<evidence type="ECO:0000255" key="2"/>
<evidence type="ECO:0000305" key="3"/>
<organism>
    <name type="scientific">Polistes dominula</name>
    <name type="common">European paper wasp</name>
    <name type="synonym">Vespa dominula</name>
    <dbReference type="NCBI Taxonomy" id="743375"/>
    <lineage>
        <taxon>Eukaryota</taxon>
        <taxon>Metazoa</taxon>
        <taxon>Ecdysozoa</taxon>
        <taxon>Arthropoda</taxon>
        <taxon>Hexapoda</taxon>
        <taxon>Insecta</taxon>
        <taxon>Pterygota</taxon>
        <taxon>Neoptera</taxon>
        <taxon>Endopterygota</taxon>
        <taxon>Hymenoptera</taxon>
        <taxon>Apocrita</taxon>
        <taxon>Aculeata</taxon>
        <taxon>Vespoidea</taxon>
        <taxon>Vespidae</taxon>
        <taxon>Polistinae</taxon>
        <taxon>Polistini</taxon>
        <taxon>Polistes</taxon>
    </lineage>
</organism>
<sequence length="227" mass="25446">MKISCLICLVIVLTIIHLSQANDYCKIKCSSGVHTVCQYGESTKPSKNCAGKLIKSVGPTEEEKKLIVEEHNRFRQKVAKGLETRGNPGPQPAASNMNNLVWNDELAKIAQVWASQCQILVHDKCRNTEKYQVGQNIAYAGSSNHFPSVTKLIQLWENEVKDFNYNTGITNKNFGKVGHYTQMVWGNTKEVGCGSLKYVEKNMQIHYLICNYGPAGNYLGQPIYTKK</sequence>
<proteinExistence type="evidence at protein level"/>
<protein>
    <recommendedName>
        <fullName>Venom allergen 5</fullName>
    </recommendedName>
    <alternativeName>
        <fullName>Antigen 5</fullName>
        <shortName>Ag5</shortName>
    </alternativeName>
    <alternativeName>
        <fullName>Cysteine-rich venom protein</fullName>
        <shortName>CRVP</shortName>
    </alternativeName>
    <allergenName>Pol d 5</allergenName>
</protein>
<feature type="signal peptide" evidence="2">
    <location>
        <begin position="1"/>
        <end position="21"/>
    </location>
</feature>
<feature type="chain" id="PRO_0000211534" description="Venom allergen 5">
    <location>
        <begin position="22"/>
        <end position="227"/>
    </location>
</feature>
<feature type="domain" description="SCP">
    <location>
        <begin position="69"/>
        <end position="212"/>
    </location>
</feature>
<feature type="disulfide bond" evidence="1">
    <location>
        <begin position="25"/>
        <end position="37"/>
    </location>
</feature>
<feature type="disulfide bond" evidence="1">
    <location>
        <begin position="29"/>
        <end position="125"/>
    </location>
</feature>
<feature type="disulfide bond" evidence="1">
    <location>
        <begin position="49"/>
        <end position="117"/>
    </location>
</feature>
<feature type="disulfide bond" evidence="1">
    <location>
        <begin position="193"/>
        <end position="210"/>
    </location>
</feature>
<keyword id="KW-0020">Allergen</keyword>
<keyword id="KW-0903">Direct protein sequencing</keyword>
<keyword id="KW-1015">Disulfide bond</keyword>
<keyword id="KW-0964">Secreted</keyword>
<keyword id="KW-0732">Signal</keyword>
<accession>P81656</accession>
<accession>Q68KJ8</accession>
<reference key="1">
    <citation type="submission" date="2004-07" db="EMBL/GenBank/DDBJ databases">
        <title>Nucleotide sequences of paper wasp venom antigen 5.</title>
        <authorList>
            <person name="Morris P.R."/>
            <person name="Schmidt M."/>
            <person name="Hoffman D.R."/>
        </authorList>
    </citation>
    <scope>NUCLEOTIDE SEQUENCE [MRNA]</scope>
    <source>
        <tissue>Venom gland</tissue>
    </source>
</reference>
<reference key="2">
    <citation type="submission" date="1999-02" db="UniProtKB">
        <authorList>
            <person name="Hoffman D.R."/>
        </authorList>
    </citation>
    <scope>PROTEIN SEQUENCE OF 22-227</scope>
    <source>
        <tissue>Venom</tissue>
    </source>
</reference>